<name>V2R26_MOUSE</name>
<gene>
    <name type="primary">Vmn2r26</name>
    <name type="synonym">V2r1b</name>
</gene>
<accession>Q6TAC4</accession>
<accession>O70409</accession>
<organism>
    <name type="scientific">Mus musculus</name>
    <name type="common">Mouse</name>
    <dbReference type="NCBI Taxonomy" id="10090"/>
    <lineage>
        <taxon>Eukaryota</taxon>
        <taxon>Metazoa</taxon>
        <taxon>Chordata</taxon>
        <taxon>Craniata</taxon>
        <taxon>Vertebrata</taxon>
        <taxon>Euteleostomi</taxon>
        <taxon>Mammalia</taxon>
        <taxon>Eutheria</taxon>
        <taxon>Euarchontoglires</taxon>
        <taxon>Glires</taxon>
        <taxon>Rodentia</taxon>
        <taxon>Myomorpha</taxon>
        <taxon>Muroidea</taxon>
        <taxon>Muridae</taxon>
        <taxon>Murinae</taxon>
        <taxon>Mus</taxon>
        <taxon>Mus</taxon>
    </lineage>
</organism>
<proteinExistence type="evidence at transcript level"/>
<evidence type="ECO:0000255" key="1"/>
<evidence type="ECO:0000269" key="2">
    <source>
    </source>
</evidence>
<evidence type="ECO:0000305" key="3"/>
<comment type="function">
    <text>Putative pheromone receptor.</text>
</comment>
<comment type="subcellular location">
    <subcellularLocation>
        <location evidence="3">Cell membrane</location>
        <topology evidence="3">Multi-pass membrane protein</topology>
    </subcellularLocation>
</comment>
<comment type="tissue specificity">
    <text evidence="2">Expressed in the basal epithelium of the vomeronasal organ. Located to vomeronasal sensory neurons that project their axons to six to ten glomeruli that reside in globally conserved areas within the caudal accessory olfactory bulb (AOB).</text>
</comment>
<comment type="similarity">
    <text evidence="3">Belongs to the G-protein coupled receptor 3 family.</text>
</comment>
<protein>
    <recommendedName>
        <fullName>Vomeronasal type-2 receptor 26</fullName>
    </recommendedName>
    <alternativeName>
        <fullName>Putative pheromone receptor V2R1b</fullName>
    </alternativeName>
    <alternativeName>
        <fullName>Vomeronasal type-2 receptor 1b</fullName>
    </alternativeName>
</protein>
<keyword id="KW-1003">Cell membrane</keyword>
<keyword id="KW-0297">G-protein coupled receptor</keyword>
<keyword id="KW-0325">Glycoprotein</keyword>
<keyword id="KW-0472">Membrane</keyword>
<keyword id="KW-0589">Pheromone response</keyword>
<keyword id="KW-0675">Receptor</keyword>
<keyword id="KW-1185">Reference proteome</keyword>
<keyword id="KW-0732">Signal</keyword>
<keyword id="KW-0807">Transducer</keyword>
<keyword id="KW-0812">Transmembrane</keyword>
<keyword id="KW-1133">Transmembrane helix</keyword>
<reference key="1">
    <citation type="journal article" date="1997" name="Neuron">
        <title>A new multigene family of putative pheromone receptors.</title>
        <authorList>
            <person name="Ryba N.J.P."/>
            <person name="Tirindelli R."/>
        </authorList>
    </citation>
    <scope>NUCLEOTIDE SEQUENCE [MRNA]</scope>
    <source>
        <tissue>Vomeronasal sensory neuron</tissue>
    </source>
</reference>
<reference key="2">
    <citation type="journal article" date="2002" name="Neuron">
        <title>A divergent pattern of sensory axonal projections is rendered convergent by second-order neurons in the accessory olfactory bulb.</title>
        <authorList>
            <person name="Del Punta K."/>
            <person name="Puche A."/>
            <person name="Adams N.C."/>
            <person name="Rodriguez I."/>
            <person name="Mombaerts P."/>
        </authorList>
    </citation>
    <scope>NUCLEOTIDE SEQUENCE [MRNA]</scope>
    <scope>TISSUE SPECIFICITY</scope>
</reference>
<sequence length="855" mass="96200">MKLLTAFSPLVVLILFQEQISCYYLTKYASSGYYQDADFVIGGLFSLRVTDGDTFISRSGVEDTSHIAEYVFADLIKYYQHILAMVFAIEKINKDPNILFNKSLGFFLFNVNFIEMKAAEGSMALLSGESPPIPNYSCRPEKTDKLVAVIGGISTSISIQISRVLSLYNVPQISYAPFDQILGTRVQLQSPYQFSMHTAALYQGIVQLLLYFTWIWVGLVVPDDMRGELYLRDITKEMISHGICFAFAEKVTEYSSMDTVNWKHFMERLTLTPVIITVGDTHSLLRIVYFVIFYNLSGNVWITTSDWYITTLPFEQNLIYTHFGGGLSFSFHMDEILGFKDFLRSVQPRKYPHDIFIRHVWSSLFGCPHYYQHRLWDLSQCEPNGSLSTRPLHAWDMNTSPYSYKVYAAVYAIAQALHEELSLRVEGDSSNKCLLQAPLPWKLHPFLQKGQLGRSTNEENTVNKEVSAIKLDIFNYQSLQSGTEAHVKVGEFVFDSHSVQHLSLNDKIITWGKHRSQTPLSVCSQSCPFGFSKTAVEGKPFCCFDCVPCPDGEIANKTDMDQCIKCPEDQYPNKQRNQCLPKIMVFLAHEDPLGTVLVSLAISLSAFSAMILGLFICYRETPIVRANNRNLSYLLLISLKLCFSCSLMFIGQPRTVTCVLRQIIFGIVFSIVISAILAKTFIVVMAFKAIKPGSILKMGMVTRLSNAIVCCGSIIQVCICAVWLGTYPPFPDVDMHSEFGQIILWCNEGSTLAFYCVLGYLGFLASLSLLIAFLARRLPDSFNEAKTITFSMLVFCSVWISFVPAYLSSKGKTMVAVEILSILASSAGLLGCIFLPKCYVILLKSGGHSRKKFFK</sequence>
<dbReference type="EMBL" id="AF053985">
    <property type="protein sequence ID" value="AAC08412.1"/>
    <property type="molecule type" value="mRNA"/>
</dbReference>
<dbReference type="EMBL" id="AY426342">
    <property type="protein sequence ID" value="AAR04436.1"/>
    <property type="molecule type" value="mRNA"/>
</dbReference>
<dbReference type="CCDS" id="CCDS20515.1"/>
<dbReference type="RefSeq" id="NP_064301.2">
    <property type="nucleotide sequence ID" value="NM_019917.2"/>
</dbReference>
<dbReference type="SMR" id="Q6TAC4"/>
<dbReference type="STRING" id="10090.ENSMUSP00000032238"/>
<dbReference type="GlyCosmos" id="Q6TAC4">
    <property type="glycosylation" value="2 sites, No reported glycans"/>
</dbReference>
<dbReference type="GlyGen" id="Q6TAC4">
    <property type="glycosylation" value="2 sites"/>
</dbReference>
<dbReference type="PaxDb" id="10090-ENSMUSP00000032238"/>
<dbReference type="ProteomicsDB" id="297904"/>
<dbReference type="DNASU" id="56552"/>
<dbReference type="Ensembl" id="ENSMUST00000032238.5">
    <property type="protein sequence ID" value="ENSMUSP00000032238.4"/>
    <property type="gene ID" value="ENSMUSG00000096630.3"/>
</dbReference>
<dbReference type="GeneID" id="56552"/>
<dbReference type="KEGG" id="mmu:56552"/>
<dbReference type="UCSC" id="uc009dqm.1">
    <property type="organism name" value="mouse"/>
</dbReference>
<dbReference type="AGR" id="MGI:2678394"/>
<dbReference type="CTD" id="56552"/>
<dbReference type="MGI" id="MGI:2678394">
    <property type="gene designation" value="Vmn2r26"/>
</dbReference>
<dbReference type="VEuPathDB" id="HostDB:ENSMUSG00000096630"/>
<dbReference type="eggNOG" id="KOG1056">
    <property type="taxonomic scope" value="Eukaryota"/>
</dbReference>
<dbReference type="GeneTree" id="ENSGT00940000163606"/>
<dbReference type="HOGENOM" id="CLU_005389_5_1_1"/>
<dbReference type="InParanoid" id="Q6TAC4"/>
<dbReference type="OMA" id="IMYGSTI"/>
<dbReference type="OrthoDB" id="5984008at2759"/>
<dbReference type="PhylomeDB" id="Q6TAC4"/>
<dbReference type="TreeFam" id="TF331269"/>
<dbReference type="BioGRID-ORCS" id="56552">
    <property type="hits" value="2 hits in 41 CRISPR screens"/>
</dbReference>
<dbReference type="PRO" id="PR:Q6TAC4"/>
<dbReference type="Proteomes" id="UP000000589">
    <property type="component" value="Chromosome 6"/>
</dbReference>
<dbReference type="RNAct" id="Q6TAC4">
    <property type="molecule type" value="protein"/>
</dbReference>
<dbReference type="Bgee" id="ENSMUSG00000096630">
    <property type="expression patterns" value="Expressed in white adipose tissue"/>
</dbReference>
<dbReference type="ExpressionAtlas" id="Q6TAC4">
    <property type="expression patterns" value="baseline and differential"/>
</dbReference>
<dbReference type="GO" id="GO:0005886">
    <property type="term" value="C:plasma membrane"/>
    <property type="evidence" value="ECO:0007669"/>
    <property type="project" value="UniProtKB-SubCell"/>
</dbReference>
<dbReference type="GO" id="GO:0038022">
    <property type="term" value="F:G protein-coupled olfactory receptor activity"/>
    <property type="evidence" value="ECO:0000316"/>
    <property type="project" value="MGI"/>
</dbReference>
<dbReference type="GO" id="GO:0030182">
    <property type="term" value="P:neuron differentiation"/>
    <property type="evidence" value="ECO:0000316"/>
    <property type="project" value="MGI"/>
</dbReference>
<dbReference type="GO" id="GO:0019236">
    <property type="term" value="P:response to pheromone"/>
    <property type="evidence" value="ECO:0007669"/>
    <property type="project" value="UniProtKB-KW"/>
</dbReference>
<dbReference type="CDD" id="cd15283">
    <property type="entry name" value="7tmC_V2R_pheromone"/>
    <property type="match status" value="1"/>
</dbReference>
<dbReference type="CDD" id="cd06365">
    <property type="entry name" value="PBP1_pheromone_receptor"/>
    <property type="match status" value="1"/>
</dbReference>
<dbReference type="FunFam" id="2.10.50.30:FF:000002">
    <property type="entry name" value="Vomeronasal 2 receptor, h1"/>
    <property type="match status" value="1"/>
</dbReference>
<dbReference type="FunFam" id="3.40.50.2300:FF:000125">
    <property type="entry name" value="Vomeronasal 2, receptor 88"/>
    <property type="match status" value="1"/>
</dbReference>
<dbReference type="Gene3D" id="3.40.50.2300">
    <property type="match status" value="2"/>
</dbReference>
<dbReference type="Gene3D" id="2.10.50.30">
    <property type="entry name" value="GPCR, family 3, nine cysteines domain"/>
    <property type="match status" value="1"/>
</dbReference>
<dbReference type="InterPro" id="IPR001828">
    <property type="entry name" value="ANF_lig-bd_rcpt"/>
</dbReference>
<dbReference type="InterPro" id="IPR000337">
    <property type="entry name" value="GPCR_3"/>
</dbReference>
<dbReference type="InterPro" id="IPR011500">
    <property type="entry name" value="GPCR_3_9-Cys_dom"/>
</dbReference>
<dbReference type="InterPro" id="IPR038550">
    <property type="entry name" value="GPCR_3_9-Cys_sf"/>
</dbReference>
<dbReference type="InterPro" id="IPR017978">
    <property type="entry name" value="GPCR_3_C"/>
</dbReference>
<dbReference type="InterPro" id="IPR000068">
    <property type="entry name" value="GPCR_3_Ca_sens_rcpt-rel"/>
</dbReference>
<dbReference type="InterPro" id="IPR017979">
    <property type="entry name" value="GPCR_3_CS"/>
</dbReference>
<dbReference type="InterPro" id="IPR004073">
    <property type="entry name" value="GPCR_3_vmron_rcpt_2"/>
</dbReference>
<dbReference type="InterPro" id="IPR028082">
    <property type="entry name" value="Peripla_BP_I"/>
</dbReference>
<dbReference type="PANTHER" id="PTHR24061">
    <property type="entry name" value="CALCIUM-SENSING RECEPTOR-RELATED"/>
    <property type="match status" value="1"/>
</dbReference>
<dbReference type="PANTHER" id="PTHR24061:SF536">
    <property type="entry name" value="VOMERONASAL 2, RECEPTOR 19-RELATED"/>
    <property type="match status" value="1"/>
</dbReference>
<dbReference type="Pfam" id="PF00003">
    <property type="entry name" value="7tm_3"/>
    <property type="match status" value="1"/>
</dbReference>
<dbReference type="Pfam" id="PF01094">
    <property type="entry name" value="ANF_receptor"/>
    <property type="match status" value="1"/>
</dbReference>
<dbReference type="Pfam" id="PF07562">
    <property type="entry name" value="NCD3G"/>
    <property type="match status" value="1"/>
</dbReference>
<dbReference type="PRINTS" id="PR00248">
    <property type="entry name" value="GPCRMGR"/>
</dbReference>
<dbReference type="PRINTS" id="PR01535">
    <property type="entry name" value="VOMERONASL2R"/>
</dbReference>
<dbReference type="SUPFAM" id="SSF53822">
    <property type="entry name" value="Periplasmic binding protein-like I"/>
    <property type="match status" value="1"/>
</dbReference>
<dbReference type="PROSITE" id="PS00981">
    <property type="entry name" value="G_PROTEIN_RECEP_F3_3"/>
    <property type="match status" value="1"/>
</dbReference>
<dbReference type="PROSITE" id="PS50259">
    <property type="entry name" value="G_PROTEIN_RECEP_F3_4"/>
    <property type="match status" value="1"/>
</dbReference>
<feature type="signal peptide" evidence="1">
    <location>
        <begin position="1"/>
        <end position="22"/>
    </location>
</feature>
<feature type="chain" id="PRO_0000246125" description="Vomeronasal type-2 receptor 26">
    <location>
        <begin position="23"/>
        <end position="855"/>
    </location>
</feature>
<feature type="topological domain" description="Extracellular" evidence="1">
    <location>
        <begin position="23"/>
        <end position="595"/>
    </location>
</feature>
<feature type="transmembrane region" description="Helical" evidence="1">
    <location>
        <begin position="596"/>
        <end position="616"/>
    </location>
</feature>
<feature type="topological domain" description="Cytoplasmic" evidence="1">
    <location>
        <begin position="617"/>
        <end position="630"/>
    </location>
</feature>
<feature type="transmembrane region" description="Helical" evidence="1">
    <location>
        <begin position="631"/>
        <end position="651"/>
    </location>
</feature>
<feature type="topological domain" description="Extracellular" evidence="1">
    <location>
        <begin position="652"/>
        <end position="662"/>
    </location>
</feature>
<feature type="transmembrane region" description="Helical" evidence="1">
    <location>
        <begin position="663"/>
        <end position="683"/>
    </location>
</feature>
<feature type="topological domain" description="Cytoplasmic" evidence="1">
    <location>
        <begin position="684"/>
        <end position="706"/>
    </location>
</feature>
<feature type="transmembrane region" description="Helical" evidence="1">
    <location>
        <begin position="707"/>
        <end position="727"/>
    </location>
</feature>
<feature type="topological domain" description="Extracellular" evidence="1">
    <location>
        <begin position="728"/>
        <end position="753"/>
    </location>
</feature>
<feature type="transmembrane region" description="Helical" evidence="1">
    <location>
        <begin position="754"/>
        <end position="774"/>
    </location>
</feature>
<feature type="topological domain" description="Cytoplasmic" evidence="1">
    <location>
        <begin position="775"/>
        <end position="786"/>
    </location>
</feature>
<feature type="transmembrane region" description="Helical" evidence="1">
    <location>
        <begin position="787"/>
        <end position="807"/>
    </location>
</feature>
<feature type="topological domain" description="Extracellular" evidence="1">
    <location>
        <begin position="808"/>
        <end position="814"/>
    </location>
</feature>
<feature type="transmembrane region" description="Helical" evidence="1">
    <location>
        <begin position="815"/>
        <end position="835"/>
    </location>
</feature>
<feature type="topological domain" description="Cytoplasmic" evidence="1">
    <location>
        <begin position="836"/>
        <end position="855"/>
    </location>
</feature>
<feature type="glycosylation site" description="N-linked (GlcNAc...) asparagine" evidence="1">
    <location>
        <position position="101"/>
    </location>
</feature>
<feature type="glycosylation site" description="N-linked (GlcNAc...) asparagine" evidence="1">
    <location>
        <position position="295"/>
    </location>
</feature>
<feature type="sequence conflict" description="In Ref. 1; AAC08412." evidence="3" ref="1">
    <original>S</original>
    <variation>P</variation>
    <location>
        <position position="46"/>
    </location>
</feature>
<feature type="sequence conflict" description="In Ref. 1; AAC08412." evidence="3" ref="1">
    <original>ADL</original>
    <variation>CGS</variation>
    <location>
        <begin position="73"/>
        <end position="75"/>
    </location>
</feature>
<feature type="sequence conflict" description="In Ref. 1; AAC08412." evidence="3" ref="1">
    <original>L</original>
    <variation>Q</variation>
    <location>
        <position position="447"/>
    </location>
</feature>
<feature type="sequence conflict" description="In Ref. 1; AAC08412." evidence="3" ref="1">
    <original>G</original>
    <variation>A</variation>
    <location>
        <position position="450"/>
    </location>
</feature>
<feature type="sequence conflict" description="In Ref. 1; AAC08412." evidence="3" ref="1">
    <original>D</original>
    <variation>H</variation>
    <location>
        <position position="561"/>
    </location>
</feature>
<feature type="sequence conflict" description="In Ref. 1; AAC08412." evidence="3" ref="1">
    <original>MV</original>
    <variation>IL</variation>
    <location>
        <begin position="584"/>
        <end position="585"/>
    </location>
</feature>
<feature type="sequence conflict" description="In Ref. 1; AAC08412." evidence="3" ref="1">
    <original>S</original>
    <variation>F</variation>
    <location>
        <position position="644"/>
    </location>
</feature>
<feature type="sequence conflict" description="In Ref. 1; AAC08412." evidence="3" ref="1">
    <original>M</original>
    <variation>I</variation>
    <location>
        <position position="648"/>
    </location>
</feature>
<feature type="sequence conflict" description="In Ref. 1; AAC08412." evidence="3" ref="1">
    <original>M</original>
    <variation>V</variation>
    <location>
        <position position="685"/>
    </location>
</feature>
<feature type="sequence conflict" description="In Ref. 2; AAR04436." evidence="3" ref="2">
    <original>K</original>
    <variation>R</variation>
    <location>
        <position position="844"/>
    </location>
</feature>